<sequence>MLEKVKHIILVLSGKGGVGKSTVSTQLALTLSESKFKVGLLDIDLCGPSVPYLLGLEGHDVHQCEEGWVPVYTNADKNLAVMSIGFLLKNRTDAVIWRGPKKTAMIKQFLEDVAWEDLDYLIIDTPPGTSDEHITVMECLKAVNADGAIIVTTPQEMALEDVRKEVTFCKKTGINIIGIVENMSGFVCPNCTECTNIFSSGGGVALAELAKVPHLGTLPIDPRVGALAGSGKACVKELPDCTTSKILQSIADNISAEKS</sequence>
<proteinExistence type="inferred from homology"/>
<reference key="1">
    <citation type="journal article" date="2007" name="Science">
        <title>Genome sequence of Aedes aegypti, a major arbovirus vector.</title>
        <authorList>
            <person name="Nene V."/>
            <person name="Wortman J.R."/>
            <person name="Lawson D."/>
            <person name="Haas B.J."/>
            <person name="Kodira C.D."/>
            <person name="Tu Z.J."/>
            <person name="Loftus B.J."/>
            <person name="Xi Z."/>
            <person name="Megy K."/>
            <person name="Grabherr M."/>
            <person name="Ren Q."/>
            <person name="Zdobnov E.M."/>
            <person name="Lobo N.F."/>
            <person name="Campbell K.S."/>
            <person name="Brown S.E."/>
            <person name="Bonaldo M.F."/>
            <person name="Zhu J."/>
            <person name="Sinkins S.P."/>
            <person name="Hogenkamp D.G."/>
            <person name="Amedeo P."/>
            <person name="Arensburger P."/>
            <person name="Atkinson P.W."/>
            <person name="Bidwell S.L."/>
            <person name="Biedler J."/>
            <person name="Birney E."/>
            <person name="Bruggner R.V."/>
            <person name="Costas J."/>
            <person name="Coy M.R."/>
            <person name="Crabtree J."/>
            <person name="Crawford M."/>
            <person name="DeBruyn B."/>
            <person name="DeCaprio D."/>
            <person name="Eiglmeier K."/>
            <person name="Eisenstadt E."/>
            <person name="El-Dorry H."/>
            <person name="Gelbart W.M."/>
            <person name="Gomes S.L."/>
            <person name="Hammond M."/>
            <person name="Hannick L.I."/>
            <person name="Hogan J.R."/>
            <person name="Holmes M.H."/>
            <person name="Jaffe D."/>
            <person name="Johnston S.J."/>
            <person name="Kennedy R.C."/>
            <person name="Koo H."/>
            <person name="Kravitz S."/>
            <person name="Kriventseva E.V."/>
            <person name="Kulp D."/>
            <person name="Labutti K."/>
            <person name="Lee E."/>
            <person name="Li S."/>
            <person name="Lovin D.D."/>
            <person name="Mao C."/>
            <person name="Mauceli E."/>
            <person name="Menck C.F."/>
            <person name="Miller J.R."/>
            <person name="Montgomery P."/>
            <person name="Mori A."/>
            <person name="Nascimento A.L."/>
            <person name="Naveira H.F."/>
            <person name="Nusbaum C."/>
            <person name="O'Leary S.B."/>
            <person name="Orvis J."/>
            <person name="Pertea M."/>
            <person name="Quesneville H."/>
            <person name="Reidenbach K.R."/>
            <person name="Rogers Y.-H.C."/>
            <person name="Roth C.W."/>
            <person name="Schneider J.R."/>
            <person name="Schatz M."/>
            <person name="Shumway M."/>
            <person name="Stanke M."/>
            <person name="Stinson E.O."/>
            <person name="Tubio J.M.C."/>
            <person name="Vanzee J.P."/>
            <person name="Verjovski-Almeida S."/>
            <person name="Werner D."/>
            <person name="White O.R."/>
            <person name="Wyder S."/>
            <person name="Zeng Q."/>
            <person name="Zhao Q."/>
            <person name="Zhao Y."/>
            <person name="Hill C.A."/>
            <person name="Raikhel A.S."/>
            <person name="Soares M.B."/>
            <person name="Knudson D.L."/>
            <person name="Lee N.H."/>
            <person name="Galagan J."/>
            <person name="Salzberg S.L."/>
            <person name="Paulsen I.T."/>
            <person name="Dimopoulos G."/>
            <person name="Collins F.H."/>
            <person name="Bruce B."/>
            <person name="Fraser-Liggett C.M."/>
            <person name="Severson D.W."/>
        </authorList>
    </citation>
    <scope>NUCLEOTIDE SEQUENCE [LARGE SCALE GENOMIC DNA]</scope>
    <source>
        <strain>LVPib12</strain>
    </source>
</reference>
<dbReference type="EMBL" id="CH478204">
    <property type="protein sequence ID" value="EAT33568.1"/>
    <property type="molecule type" value="Genomic_DNA"/>
</dbReference>
<dbReference type="EMBL" id="CH477488">
    <property type="protein sequence ID" value="EAT40099.1"/>
    <property type="molecule type" value="Genomic_DNA"/>
</dbReference>
<dbReference type="RefSeq" id="XP_001648142.1">
    <property type="nucleotide sequence ID" value="XM_001648092.1"/>
</dbReference>
<dbReference type="SMR" id="Q16H50"/>
<dbReference type="FunCoup" id="Q16H50">
    <property type="interactions" value="247"/>
</dbReference>
<dbReference type="STRING" id="7159.Q16H50"/>
<dbReference type="PaxDb" id="7159-AAEL008143-PA"/>
<dbReference type="EnsemblMetazoa" id="AAEL014154-RB">
    <property type="protein sequence ID" value="AAEL014154-PB"/>
    <property type="gene ID" value="AAEL014154"/>
</dbReference>
<dbReference type="GeneID" id="5570175"/>
<dbReference type="KEGG" id="aag:5570175"/>
<dbReference type="CTD" id="10101"/>
<dbReference type="VEuPathDB" id="VectorBase:AAEL014154"/>
<dbReference type="eggNOG" id="KOG3022">
    <property type="taxonomic scope" value="Eukaryota"/>
</dbReference>
<dbReference type="HOGENOM" id="CLU_024839_0_1_1"/>
<dbReference type="InParanoid" id="Q16H50"/>
<dbReference type="OMA" id="WIPVFAD"/>
<dbReference type="OrthoDB" id="1741334at2759"/>
<dbReference type="PhylomeDB" id="Q16H50"/>
<dbReference type="Proteomes" id="UP000008820">
    <property type="component" value="Chromosome 3"/>
</dbReference>
<dbReference type="Proteomes" id="UP000682892">
    <property type="component" value="Unassembled WGS sequence"/>
</dbReference>
<dbReference type="GO" id="GO:0005829">
    <property type="term" value="C:cytosol"/>
    <property type="evidence" value="ECO:0007669"/>
    <property type="project" value="TreeGrafter"/>
</dbReference>
<dbReference type="GO" id="GO:0051539">
    <property type="term" value="F:4 iron, 4 sulfur cluster binding"/>
    <property type="evidence" value="ECO:0007669"/>
    <property type="project" value="UniProtKB-UniRule"/>
</dbReference>
<dbReference type="GO" id="GO:0005524">
    <property type="term" value="F:ATP binding"/>
    <property type="evidence" value="ECO:0007669"/>
    <property type="project" value="UniProtKB-KW"/>
</dbReference>
<dbReference type="GO" id="GO:0140663">
    <property type="term" value="F:ATP-dependent FeS chaperone activity"/>
    <property type="evidence" value="ECO:0007669"/>
    <property type="project" value="InterPro"/>
</dbReference>
<dbReference type="GO" id="GO:0046872">
    <property type="term" value="F:metal ion binding"/>
    <property type="evidence" value="ECO:0007669"/>
    <property type="project" value="UniProtKB-KW"/>
</dbReference>
<dbReference type="GO" id="GO:0016226">
    <property type="term" value="P:iron-sulfur cluster assembly"/>
    <property type="evidence" value="ECO:0007669"/>
    <property type="project" value="UniProtKB-UniRule"/>
</dbReference>
<dbReference type="CDD" id="cd02037">
    <property type="entry name" value="Mrp_NBP35"/>
    <property type="match status" value="1"/>
</dbReference>
<dbReference type="FunFam" id="3.40.50.300:FF:000796">
    <property type="entry name" value="Cytosolic Fe-S cluster assembly factor NUBP2"/>
    <property type="match status" value="1"/>
</dbReference>
<dbReference type="Gene3D" id="3.40.50.300">
    <property type="entry name" value="P-loop containing nucleotide triphosphate hydrolases"/>
    <property type="match status" value="1"/>
</dbReference>
<dbReference type="HAMAP" id="MF_02040">
    <property type="entry name" value="Mrp_NBP35"/>
    <property type="match status" value="1"/>
</dbReference>
<dbReference type="HAMAP" id="MF_03039">
    <property type="entry name" value="NUBP2"/>
    <property type="match status" value="1"/>
</dbReference>
<dbReference type="InterPro" id="IPR000808">
    <property type="entry name" value="Mrp-like_CS"/>
</dbReference>
<dbReference type="InterPro" id="IPR019591">
    <property type="entry name" value="Mrp/NBP35_ATP-bd"/>
</dbReference>
<dbReference type="InterPro" id="IPR028600">
    <property type="entry name" value="NUBP2/Cfd1_eukaryotes"/>
</dbReference>
<dbReference type="InterPro" id="IPR027417">
    <property type="entry name" value="P-loop_NTPase"/>
</dbReference>
<dbReference type="InterPro" id="IPR033756">
    <property type="entry name" value="YlxH/NBP35"/>
</dbReference>
<dbReference type="PANTHER" id="PTHR23264:SF19">
    <property type="entry name" value="CYTOSOLIC FE-S CLUSTER ASSEMBLY FACTOR NUBP2"/>
    <property type="match status" value="1"/>
</dbReference>
<dbReference type="PANTHER" id="PTHR23264">
    <property type="entry name" value="NUCLEOTIDE-BINDING PROTEIN NBP35 YEAST -RELATED"/>
    <property type="match status" value="1"/>
</dbReference>
<dbReference type="Pfam" id="PF10609">
    <property type="entry name" value="ParA"/>
    <property type="match status" value="1"/>
</dbReference>
<dbReference type="SUPFAM" id="SSF52540">
    <property type="entry name" value="P-loop containing nucleoside triphosphate hydrolases"/>
    <property type="match status" value="1"/>
</dbReference>
<dbReference type="PROSITE" id="PS01215">
    <property type="entry name" value="MRP"/>
    <property type="match status" value="1"/>
</dbReference>
<organism>
    <name type="scientific">Aedes aegypti</name>
    <name type="common">Yellowfever mosquito</name>
    <name type="synonym">Culex aegypti</name>
    <dbReference type="NCBI Taxonomy" id="7159"/>
    <lineage>
        <taxon>Eukaryota</taxon>
        <taxon>Metazoa</taxon>
        <taxon>Ecdysozoa</taxon>
        <taxon>Arthropoda</taxon>
        <taxon>Hexapoda</taxon>
        <taxon>Insecta</taxon>
        <taxon>Pterygota</taxon>
        <taxon>Neoptera</taxon>
        <taxon>Endopterygota</taxon>
        <taxon>Diptera</taxon>
        <taxon>Nematocera</taxon>
        <taxon>Culicoidea</taxon>
        <taxon>Culicidae</taxon>
        <taxon>Culicinae</taxon>
        <taxon>Aedini</taxon>
        <taxon>Aedes</taxon>
        <taxon>Stegomyia</taxon>
    </lineage>
</organism>
<comment type="function">
    <text evidence="2">Component of the cytosolic iron-sulfur (Fe/S) protein assembly (CIA) machinery. Required for maturation of extramitochondrial Fe-S proteins. The Nubp1-Nubp2 heterotetramer forms a Fe-S scaffold complex, mediating the de novo assembly of an Fe-S cluster and its transfer to target apoproteins.</text>
</comment>
<comment type="cofactor">
    <cofactor evidence="2">
        <name>[4Fe-4S] cluster</name>
        <dbReference type="ChEBI" id="CHEBI:49883"/>
    </cofactor>
    <text evidence="2">Binds 4 [4Fe-4S] clusters per heterotetramer. Contains two stable clusters in the N-termini of Nubp1 and two labile, bridging clusters between subunits of the Nubp1-Nubp2 heterotetramer.</text>
</comment>
<comment type="subunit">
    <text evidence="2">Heterotetramer of 2 Nubp1 and 2 Nubp2 chains.</text>
</comment>
<comment type="subcellular location">
    <subcellularLocation>
        <location evidence="2">Cytoplasm</location>
    </subcellularLocation>
</comment>
<comment type="similarity">
    <text evidence="2">Belongs to the Mrp/NBP35 ATP-binding proteins family. NUBP2/CFD1 subfamily.</text>
</comment>
<protein>
    <recommendedName>
        <fullName evidence="2">Cytosolic Fe-S cluster assembly factor Nubp2 homolog</fullName>
    </recommendedName>
</protein>
<accession>Q16H50</accession>
<keyword id="KW-0004">4Fe-4S</keyword>
<keyword id="KW-0067">ATP-binding</keyword>
<keyword id="KW-0963">Cytoplasm</keyword>
<keyword id="KW-0408">Iron</keyword>
<keyword id="KW-0411">Iron-sulfur</keyword>
<keyword id="KW-0479">Metal-binding</keyword>
<keyword id="KW-0547">Nucleotide-binding</keyword>
<keyword id="KW-1185">Reference proteome</keyword>
<name>NUBP2_AEDAE</name>
<gene>
    <name evidence="1" type="primary">Nubp2</name>
    <name type="ORF">AAEL008143</name>
    <name type="ORF">AAEL014154</name>
</gene>
<feature type="chain" id="PRO_0000382705" description="Cytosolic Fe-S cluster assembly factor Nubp2 homolog">
    <location>
        <begin position="1"/>
        <end position="259"/>
    </location>
</feature>
<feature type="binding site" evidence="2">
    <location>
        <begin position="14"/>
        <end position="21"/>
    </location>
    <ligand>
        <name>ATP</name>
        <dbReference type="ChEBI" id="CHEBI:30616"/>
    </ligand>
</feature>
<feature type="binding site" evidence="2">
    <location>
        <position position="188"/>
    </location>
    <ligand>
        <name>[4Fe-4S] cluster</name>
        <dbReference type="ChEBI" id="CHEBI:49883"/>
        <note>ligand shared between dimeric partners</note>
    </ligand>
</feature>
<feature type="binding site" evidence="2">
    <location>
        <position position="191"/>
    </location>
    <ligand>
        <name>[4Fe-4S] cluster</name>
        <dbReference type="ChEBI" id="CHEBI:49883"/>
        <note>ligand shared between dimeric partners</note>
    </ligand>
</feature>
<evidence type="ECO:0000250" key="1">
    <source>
        <dbReference type="UniProtKB" id="Q9VPD2"/>
    </source>
</evidence>
<evidence type="ECO:0000255" key="2">
    <source>
        <dbReference type="HAMAP-Rule" id="MF_03039"/>
    </source>
</evidence>